<name>Y805_YERPG</name>
<evidence type="ECO:0000255" key="1">
    <source>
        <dbReference type="HAMAP-Rule" id="MF_00652"/>
    </source>
</evidence>
<feature type="chain" id="PRO_1000131154" description="UPF0246 protein YpAngola_A0805">
    <location>
        <begin position="1"/>
        <end position="258"/>
    </location>
</feature>
<gene>
    <name type="ordered locus">YpAngola_A0805</name>
</gene>
<sequence>MLIIISPAKTLDYQSPLATTKFSQPEMLDKSQALIEICRELTPAQISSLMGISDKLAGLNAARFSEWQPDFTPANARQAILAFKGDVYTGMQAESFSEADFDFAQQHLRMLSGLYGLLRPLDLMQPYRLEMGTKLANPRGKDLYAFWGDQITEKLNQALELQGDNILINLASDEYFKAVKPAKLSGSLIKPVFLDEKNGKYKIISFYAKKARGLMSRFIIQNKLTKPEQLVDFNLEGYEFDAGLSAKNELVFKRAEQH</sequence>
<proteinExistence type="inferred from homology"/>
<accession>A9R023</accession>
<protein>
    <recommendedName>
        <fullName evidence="1">UPF0246 protein YpAngola_A0805</fullName>
    </recommendedName>
</protein>
<dbReference type="EMBL" id="CP000901">
    <property type="protein sequence ID" value="ABX86317.1"/>
    <property type="molecule type" value="Genomic_DNA"/>
</dbReference>
<dbReference type="SMR" id="A9R023"/>
<dbReference type="KEGG" id="ypg:YpAngola_A0805"/>
<dbReference type="PATRIC" id="fig|349746.12.peg.1754"/>
<dbReference type="GO" id="GO:0005829">
    <property type="term" value="C:cytosol"/>
    <property type="evidence" value="ECO:0007669"/>
    <property type="project" value="TreeGrafter"/>
</dbReference>
<dbReference type="GO" id="GO:0033194">
    <property type="term" value="P:response to hydroperoxide"/>
    <property type="evidence" value="ECO:0007669"/>
    <property type="project" value="TreeGrafter"/>
</dbReference>
<dbReference type="HAMAP" id="MF_00652">
    <property type="entry name" value="UPF0246"/>
    <property type="match status" value="1"/>
</dbReference>
<dbReference type="InterPro" id="IPR005583">
    <property type="entry name" value="YaaA"/>
</dbReference>
<dbReference type="NCBIfam" id="NF002541">
    <property type="entry name" value="PRK02101.1-1"/>
    <property type="match status" value="1"/>
</dbReference>
<dbReference type="NCBIfam" id="NF002542">
    <property type="entry name" value="PRK02101.1-3"/>
    <property type="match status" value="1"/>
</dbReference>
<dbReference type="PANTHER" id="PTHR30283:SF4">
    <property type="entry name" value="PEROXIDE STRESS RESISTANCE PROTEIN YAAA"/>
    <property type="match status" value="1"/>
</dbReference>
<dbReference type="PANTHER" id="PTHR30283">
    <property type="entry name" value="PEROXIDE STRESS RESPONSE PROTEIN YAAA"/>
    <property type="match status" value="1"/>
</dbReference>
<dbReference type="Pfam" id="PF03883">
    <property type="entry name" value="H2O2_YaaD"/>
    <property type="match status" value="1"/>
</dbReference>
<reference key="1">
    <citation type="journal article" date="2010" name="J. Bacteriol.">
        <title>Genome sequence of the deep-rooted Yersinia pestis strain Angola reveals new insights into the evolution and pangenome of the plague bacterium.</title>
        <authorList>
            <person name="Eppinger M."/>
            <person name="Worsham P.L."/>
            <person name="Nikolich M.P."/>
            <person name="Riley D.R."/>
            <person name="Sebastian Y."/>
            <person name="Mou S."/>
            <person name="Achtman M."/>
            <person name="Lindler L.E."/>
            <person name="Ravel J."/>
        </authorList>
    </citation>
    <scope>NUCLEOTIDE SEQUENCE [LARGE SCALE GENOMIC DNA]</scope>
    <source>
        <strain>Angola</strain>
    </source>
</reference>
<comment type="similarity">
    <text evidence="1">Belongs to the UPF0246 family.</text>
</comment>
<organism>
    <name type="scientific">Yersinia pestis bv. Antiqua (strain Angola)</name>
    <dbReference type="NCBI Taxonomy" id="349746"/>
    <lineage>
        <taxon>Bacteria</taxon>
        <taxon>Pseudomonadati</taxon>
        <taxon>Pseudomonadota</taxon>
        <taxon>Gammaproteobacteria</taxon>
        <taxon>Enterobacterales</taxon>
        <taxon>Yersiniaceae</taxon>
        <taxon>Yersinia</taxon>
    </lineage>
</organism>